<feature type="initiator methionine" description="Removed" evidence="18 34">
    <location>
        <position position="1"/>
    </location>
</feature>
<feature type="chain" id="PRO_0000056415" description="Aldehyde dehydrogenase 1A1">
    <location>
        <begin position="2"/>
        <end position="501"/>
    </location>
</feature>
<feature type="region of interest" description="Mediates interaction with PRMT3" evidence="16">
    <location>
        <begin position="336"/>
        <end position="501"/>
    </location>
</feature>
<feature type="active site" description="Proton acceptor" evidence="7 8 17">
    <location>
        <position position="269"/>
    </location>
</feature>
<feature type="active site" description="Nucleophile" evidence="7 8 17">
    <location>
        <position position="303"/>
    </location>
</feature>
<feature type="binding site" evidence="13 14 27 31">
    <location>
        <begin position="167"/>
        <end position="170"/>
    </location>
    <ligand>
        <name>NAD(+)</name>
        <dbReference type="ChEBI" id="CHEBI:57540"/>
    </ligand>
</feature>
<feature type="binding site" evidence="13 14 27 31">
    <location>
        <begin position="193"/>
        <end position="196"/>
    </location>
    <ligand>
        <name>NAD(+)</name>
        <dbReference type="ChEBI" id="CHEBI:57540"/>
    </ligand>
</feature>
<feature type="binding site" evidence="13 14 27 31">
    <location>
        <begin position="226"/>
        <end position="227"/>
    </location>
    <ligand>
        <name>NAD(+)</name>
        <dbReference type="ChEBI" id="CHEBI:57540"/>
    </ligand>
</feature>
<feature type="binding site" evidence="13 14 27 31">
    <location>
        <begin position="246"/>
        <end position="247"/>
    </location>
    <ligand>
        <name>NAD(+)</name>
        <dbReference type="ChEBI" id="CHEBI:57540"/>
    </ligand>
</feature>
<feature type="binding site" evidence="13 14 27 31">
    <location>
        <begin position="269"/>
        <end position="271"/>
    </location>
    <ligand>
        <name>NAD(+)</name>
        <dbReference type="ChEBI" id="CHEBI:57540"/>
    </ligand>
</feature>
<feature type="binding site" evidence="13 14 27 31">
    <location>
        <begin position="349"/>
        <end position="353"/>
    </location>
    <ligand>
        <name>NAD(+)</name>
        <dbReference type="ChEBI" id="CHEBI:57540"/>
    </ligand>
</feature>
<feature type="binding site" evidence="13 14 27 31">
    <location>
        <begin position="400"/>
        <end position="402"/>
    </location>
    <ligand>
        <name>NAD(+)</name>
        <dbReference type="ChEBI" id="CHEBI:57540"/>
    </ligand>
</feature>
<feature type="site" description="Transition state stabilizer" evidence="2">
    <location>
        <position position="170"/>
    </location>
</feature>
<feature type="modified residue" description="N-acetylserine" evidence="18 34">
    <location>
        <position position="2"/>
    </location>
</feature>
<feature type="modified residue" description="N6-acetyllysine" evidence="33">
    <location>
        <position position="91"/>
    </location>
</feature>
<feature type="modified residue" description="N6-acetyllysine" evidence="33">
    <location>
        <position position="128"/>
    </location>
</feature>
<feature type="modified residue" description="N6-acetyllysine" evidence="33">
    <location>
        <position position="252"/>
    </location>
</feature>
<feature type="modified residue" description="Phosphothreonine" evidence="35">
    <location>
        <position position="337"/>
    </location>
</feature>
<feature type="modified residue" description="N6-acetyllysine" evidence="33">
    <location>
        <position position="353"/>
    </location>
</feature>
<feature type="modified residue" description="N6-acetyllysine" evidence="33">
    <location>
        <position position="367"/>
    </location>
</feature>
<feature type="modified residue" description="N6-acetyllysine" evidence="33">
    <location>
        <position position="410"/>
    </location>
</feature>
<feature type="modified residue" description="Phosphoserine" evidence="35">
    <location>
        <position position="413"/>
    </location>
</feature>
<feature type="modified residue" description="N6-acetyllysine" evidence="33">
    <location>
        <position position="419"/>
    </location>
</feature>
<feature type="modified residue" description="N6-acetyllysine" evidence="33">
    <location>
        <position position="435"/>
    </location>
</feature>
<feature type="modified residue" description="N6-acetyllysine" evidence="33">
    <location>
        <position position="495"/>
    </location>
</feature>
<feature type="sequence variant" id="VAR_048901" description="In dbSNP:rs1049981." evidence="19">
    <original>N</original>
    <variation>S</variation>
    <location>
        <position position="121"/>
    </location>
</feature>
<feature type="sequence variant" id="VAR_048902" description="In dbSNP:rs11554423.">
    <original>G</original>
    <variation>R</variation>
    <location>
        <position position="125"/>
    </location>
</feature>
<feature type="sequence variant" id="VAR_017778" description="In dbSNP:rs8187929." evidence="20">
    <original>I</original>
    <variation>F</variation>
    <location>
        <position position="177"/>
    </location>
</feature>
<feature type="mutagenesis site" description="Does not prevent inhibition by duocarmycin analogs." evidence="15">
    <original>C</original>
    <variation>A</variation>
    <variation>S</variation>
    <location>
        <position position="302"/>
    </location>
</feature>
<feature type="mutagenesis site" description="No significant effect on aldehyde dehydrogenase activity. Prevents the inhibition by ALDH1A1-specific inhibitors." evidence="14">
    <original>G</original>
    <variation>N</variation>
    <location>
        <position position="458"/>
    </location>
</feature>
<feature type="sequence conflict" description="In Ref. 11; AAA35518 and 12; AAA51695." evidence="22" ref="11 12">
    <original>V</original>
    <variation>I</variation>
    <location>
        <position position="162"/>
    </location>
</feature>
<feature type="strand" evidence="37">
    <location>
        <begin position="22"/>
        <end position="25"/>
    </location>
</feature>
<feature type="strand" evidence="37">
    <location>
        <begin position="28"/>
        <end position="30"/>
    </location>
</feature>
<feature type="strand" evidence="37">
    <location>
        <begin position="37"/>
        <end position="41"/>
    </location>
</feature>
<feature type="turn" evidence="37">
    <location>
        <begin position="43"/>
        <end position="45"/>
    </location>
</feature>
<feature type="strand" evidence="37">
    <location>
        <begin position="48"/>
        <end position="53"/>
    </location>
</feature>
<feature type="helix" evidence="37">
    <location>
        <begin position="57"/>
        <end position="70"/>
    </location>
</feature>
<feature type="helix" evidence="37">
    <location>
        <begin position="76"/>
        <end position="79"/>
    </location>
</feature>
<feature type="helix" evidence="37">
    <location>
        <begin position="82"/>
        <end position="98"/>
    </location>
</feature>
<feature type="helix" evidence="37">
    <location>
        <begin position="100"/>
        <end position="111"/>
    </location>
</feature>
<feature type="helix" evidence="37">
    <location>
        <begin position="115"/>
        <end position="120"/>
    </location>
</feature>
<feature type="helix" evidence="37">
    <location>
        <begin position="122"/>
        <end position="136"/>
    </location>
</feature>
<feature type="helix" evidence="37">
    <location>
        <begin position="137"/>
        <end position="139"/>
    </location>
</feature>
<feature type="strand" evidence="36">
    <location>
        <begin position="142"/>
        <end position="145"/>
    </location>
</feature>
<feature type="strand" evidence="37">
    <location>
        <begin position="148"/>
        <end position="159"/>
    </location>
</feature>
<feature type="strand" evidence="37">
    <location>
        <begin position="161"/>
        <end position="166"/>
    </location>
</feature>
<feature type="strand" evidence="37">
    <location>
        <begin position="169"/>
        <end position="171"/>
    </location>
</feature>
<feature type="helix" evidence="37">
    <location>
        <begin position="172"/>
        <end position="185"/>
    </location>
</feature>
<feature type="strand" evidence="37">
    <location>
        <begin position="189"/>
        <end position="193"/>
    </location>
</feature>
<feature type="strand" evidence="39">
    <location>
        <begin position="196"/>
        <end position="198"/>
    </location>
</feature>
<feature type="helix" evidence="37">
    <location>
        <begin position="200"/>
        <end position="212"/>
    </location>
</feature>
<feature type="strand" evidence="37">
    <location>
        <begin position="218"/>
        <end position="221"/>
    </location>
</feature>
<feature type="helix" evidence="37">
    <location>
        <begin position="226"/>
        <end position="234"/>
    </location>
</feature>
<feature type="strand" evidence="37">
    <location>
        <begin position="241"/>
        <end position="246"/>
    </location>
</feature>
<feature type="helix" evidence="37">
    <location>
        <begin position="248"/>
        <end position="260"/>
    </location>
</feature>
<feature type="turn" evidence="39">
    <location>
        <begin position="261"/>
        <end position="263"/>
    </location>
</feature>
<feature type="strand" evidence="37">
    <location>
        <begin position="265"/>
        <end position="269"/>
    </location>
</feature>
<feature type="strand" evidence="37">
    <location>
        <begin position="275"/>
        <end position="278"/>
    </location>
</feature>
<feature type="strand" evidence="40">
    <location>
        <begin position="280"/>
        <end position="282"/>
    </location>
</feature>
<feature type="helix" evidence="37">
    <location>
        <begin position="284"/>
        <end position="296"/>
    </location>
</feature>
<feature type="helix" evidence="37">
    <location>
        <begin position="297"/>
        <end position="300"/>
    </location>
</feature>
<feature type="strand" evidence="37">
    <location>
        <begin position="308"/>
        <end position="312"/>
    </location>
</feature>
<feature type="helix" evidence="37">
    <location>
        <begin position="313"/>
        <end position="327"/>
    </location>
</feature>
<feature type="helix" evidence="37">
    <location>
        <begin position="348"/>
        <end position="363"/>
    </location>
</feature>
<feature type="strand" evidence="37">
    <location>
        <begin position="367"/>
        <end position="370"/>
    </location>
</feature>
<feature type="strand" evidence="37">
    <location>
        <begin position="373"/>
        <end position="379"/>
    </location>
</feature>
<feature type="strand" evidence="37">
    <location>
        <begin position="385"/>
        <end position="389"/>
    </location>
</feature>
<feature type="strand" evidence="38">
    <location>
        <begin position="392"/>
        <end position="394"/>
    </location>
</feature>
<feature type="helix" evidence="37">
    <location>
        <begin position="395"/>
        <end position="398"/>
    </location>
</feature>
<feature type="strand" evidence="37">
    <location>
        <begin position="403"/>
        <end position="412"/>
    </location>
</feature>
<feature type="helix" evidence="37">
    <location>
        <begin position="414"/>
        <end position="422"/>
    </location>
</feature>
<feature type="strand" evidence="39">
    <location>
        <begin position="423"/>
        <end position="425"/>
    </location>
</feature>
<feature type="strand" evidence="37">
    <location>
        <begin position="428"/>
        <end position="433"/>
    </location>
</feature>
<feature type="helix" evidence="37">
    <location>
        <begin position="437"/>
        <end position="446"/>
    </location>
</feature>
<feature type="strand" evidence="37">
    <location>
        <begin position="450"/>
        <end position="455"/>
    </location>
</feature>
<feature type="strand" evidence="38">
    <location>
        <begin position="462"/>
        <end position="464"/>
    </location>
</feature>
<feature type="helix" evidence="37">
    <location>
        <begin position="470"/>
        <end position="472"/>
    </location>
</feature>
<feature type="strand" evidence="37">
    <location>
        <begin position="473"/>
        <end position="475"/>
    </location>
</feature>
<feature type="helix" evidence="37">
    <location>
        <begin position="479"/>
        <end position="483"/>
    </location>
</feature>
<feature type="helix" evidence="37">
    <location>
        <begin position="484"/>
        <end position="486"/>
    </location>
</feature>
<feature type="strand" evidence="37">
    <location>
        <begin position="487"/>
        <end position="495"/>
    </location>
</feature>
<keyword id="KW-0002">3D-structure</keyword>
<keyword id="KW-0007">Acetylation</keyword>
<keyword id="KW-0966">Cell projection</keyword>
<keyword id="KW-0963">Cytoplasm</keyword>
<keyword id="KW-0903">Direct protein sequencing</keyword>
<keyword id="KW-0443">Lipid metabolism</keyword>
<keyword id="KW-0520">NAD</keyword>
<keyword id="KW-0547">Nucleotide-binding</keyword>
<keyword id="KW-0560">Oxidoreductase</keyword>
<keyword id="KW-0597">Phosphoprotein</keyword>
<keyword id="KW-1267">Proteomics identification</keyword>
<keyword id="KW-1185">Reference proteome</keyword>
<comment type="function">
    <text evidence="3 9 10 11 12 13 15">Cytosolic dehydrogenase that catalyzes the irreversible oxidation of a wide range of aldehydes to their corresponding carboxylic acid (PubMed:12941160, PubMed:15623782, PubMed:17175089, PubMed:19296407, PubMed:25450233, PubMed:26373694). Functions downstream of retinol dehydrogenases and catalyzes the oxidation of retinaldehyde into retinoic acid, the second step in the oxidation of retinol/vitamin A into retinoic acid (By similarity). This pathway is crucial to control the levels of retinol and retinoic acid, two important molecules which excess can be teratogenic and cytotoxic (By similarity). Also oxidizes aldehydes resulting from lipid peroxidation like (E)-4-hydroxynon-2-enal/HNE, malonaldehyde and hexanal that form protein adducts and are highly cytotoxic. By participating for instance to the clearance of (E)-4-hydroxynon-2-enal/HNE in the lens epithelium prevents the formation of HNE-protein adducts and lens opacification (PubMed:12941160, PubMed:15623782, PubMed:19296407). Also functions downstream of fructosamine-3-kinase in the fructosamine degradation pathway by catalyzing the oxidation of 3-deoxyglucosone, the carbohydrate product of fructosamine 3-phosphate decomposition, which is itself a potent glycating agent that may react with lysine and arginine side-chains of proteins (PubMed:17175089). Also has an aminobutyraldehyde dehydrogenase activity and is probably part of an alternative pathway for the biosynthesis of GABA/4-aminobutanoate in midbrain, thereby playing a role in GABAergic synaptic transmission (By similarity).</text>
</comment>
<comment type="catalytic activity">
    <reaction evidence="9 10 11 12">
        <text>an aldehyde + NAD(+) + H2O = a carboxylate + NADH + 2 H(+)</text>
        <dbReference type="Rhea" id="RHEA:16185"/>
        <dbReference type="ChEBI" id="CHEBI:15377"/>
        <dbReference type="ChEBI" id="CHEBI:15378"/>
        <dbReference type="ChEBI" id="CHEBI:17478"/>
        <dbReference type="ChEBI" id="CHEBI:29067"/>
        <dbReference type="ChEBI" id="CHEBI:57540"/>
        <dbReference type="ChEBI" id="CHEBI:57945"/>
        <dbReference type="EC" id="1.2.1.3"/>
    </reaction>
    <physiologicalReaction direction="left-to-right" evidence="25">
        <dbReference type="Rhea" id="RHEA:16186"/>
    </physiologicalReaction>
</comment>
<comment type="catalytic activity">
    <reaction evidence="4">
        <text>all-trans-retinal + NAD(+) + H2O = all-trans-retinoate + NADH + 2 H(+)</text>
        <dbReference type="Rhea" id="RHEA:42080"/>
        <dbReference type="ChEBI" id="CHEBI:15377"/>
        <dbReference type="ChEBI" id="CHEBI:15378"/>
        <dbReference type="ChEBI" id="CHEBI:17898"/>
        <dbReference type="ChEBI" id="CHEBI:35291"/>
        <dbReference type="ChEBI" id="CHEBI:57540"/>
        <dbReference type="ChEBI" id="CHEBI:57945"/>
        <dbReference type="EC" id="1.2.1.36"/>
    </reaction>
    <physiologicalReaction direction="left-to-right" evidence="4">
        <dbReference type="Rhea" id="RHEA:42081"/>
    </physiologicalReaction>
</comment>
<comment type="catalytic activity">
    <reaction evidence="4">
        <text>9-cis-retinal + NAD(+) + H2O = 9-cis-retinoate + NADH + 2 H(+)</text>
        <dbReference type="Rhea" id="RHEA:42084"/>
        <dbReference type="ChEBI" id="CHEBI:15377"/>
        <dbReference type="ChEBI" id="CHEBI:15378"/>
        <dbReference type="ChEBI" id="CHEBI:57540"/>
        <dbReference type="ChEBI" id="CHEBI:57945"/>
        <dbReference type="ChEBI" id="CHEBI:78273"/>
        <dbReference type="ChEBI" id="CHEBI:78630"/>
    </reaction>
    <physiologicalReaction direction="left-to-right" evidence="4">
        <dbReference type="Rhea" id="RHEA:42085"/>
    </physiologicalReaction>
</comment>
<comment type="catalytic activity">
    <reaction evidence="4">
        <text>11-cis-retinal + NAD(+) + H2O = 11-cis-retinoate + NADH + 2 H(+)</text>
        <dbReference type="Rhea" id="RHEA:47132"/>
        <dbReference type="ChEBI" id="CHEBI:15377"/>
        <dbReference type="ChEBI" id="CHEBI:15378"/>
        <dbReference type="ChEBI" id="CHEBI:16066"/>
        <dbReference type="ChEBI" id="CHEBI:57540"/>
        <dbReference type="ChEBI" id="CHEBI:57945"/>
        <dbReference type="ChEBI" id="CHEBI:87435"/>
    </reaction>
    <physiologicalReaction direction="left-to-right" evidence="4">
        <dbReference type="Rhea" id="RHEA:47133"/>
    </physiologicalReaction>
</comment>
<comment type="catalytic activity">
    <reaction evidence="6">
        <text>13-cis-retinal + NAD(+) + H2O = 13-cis-retinoate + NADH + 2 H(+)</text>
        <dbReference type="Rhea" id="RHEA:67332"/>
        <dbReference type="ChEBI" id="CHEBI:15377"/>
        <dbReference type="ChEBI" id="CHEBI:15378"/>
        <dbReference type="ChEBI" id="CHEBI:45487"/>
        <dbReference type="ChEBI" id="CHEBI:57540"/>
        <dbReference type="ChEBI" id="CHEBI:57945"/>
        <dbReference type="ChEBI" id="CHEBI:169952"/>
    </reaction>
    <physiologicalReaction direction="left-to-right" evidence="6">
        <dbReference type="Rhea" id="RHEA:67333"/>
    </physiologicalReaction>
</comment>
<comment type="catalytic activity">
    <reaction evidence="11">
        <text>3-deoxyglucosone + NAD(+) + H2O = 2-dehydro-3-deoxy-D-gluconate + NADH + 2 H(+)</text>
        <dbReference type="Rhea" id="RHEA:67244"/>
        <dbReference type="ChEBI" id="CHEBI:15377"/>
        <dbReference type="ChEBI" id="CHEBI:15378"/>
        <dbReference type="ChEBI" id="CHEBI:57540"/>
        <dbReference type="ChEBI" id="CHEBI:57945"/>
        <dbReference type="ChEBI" id="CHEBI:57990"/>
        <dbReference type="ChEBI" id="CHEBI:60777"/>
    </reaction>
    <physiologicalReaction direction="left-to-right" evidence="24">
        <dbReference type="Rhea" id="RHEA:67245"/>
    </physiologicalReaction>
</comment>
<comment type="catalytic activity">
    <reaction evidence="9 10 12">
        <text>(E)-4-hydroxynon-2-enal + NAD(+) + H2O = (E)-4-hydroxynon-2-enoate + NADH + 2 H(+)</text>
        <dbReference type="Rhea" id="RHEA:67248"/>
        <dbReference type="ChEBI" id="CHEBI:15377"/>
        <dbReference type="ChEBI" id="CHEBI:15378"/>
        <dbReference type="ChEBI" id="CHEBI:57540"/>
        <dbReference type="ChEBI" id="CHEBI:57945"/>
        <dbReference type="ChEBI" id="CHEBI:58968"/>
        <dbReference type="ChEBI" id="CHEBI:142920"/>
    </reaction>
    <physiologicalReaction direction="left-to-right" evidence="10">
        <dbReference type="Rhea" id="RHEA:67249"/>
    </physiologicalReaction>
</comment>
<comment type="catalytic activity">
    <reaction evidence="9 12">
        <text>malonaldehyde + NAD(+) + H2O = 3-oxopropanoate + NADH + 2 H(+)</text>
        <dbReference type="Rhea" id="RHEA:67252"/>
        <dbReference type="ChEBI" id="CHEBI:15377"/>
        <dbReference type="ChEBI" id="CHEBI:15378"/>
        <dbReference type="ChEBI" id="CHEBI:33190"/>
        <dbReference type="ChEBI" id="CHEBI:57540"/>
        <dbReference type="ChEBI" id="CHEBI:57945"/>
        <dbReference type="ChEBI" id="CHEBI:566274"/>
    </reaction>
    <physiologicalReaction direction="left-to-right" evidence="25">
        <dbReference type="Rhea" id="RHEA:67253"/>
    </physiologicalReaction>
</comment>
<comment type="catalytic activity">
    <reaction evidence="9">
        <text>hexanal + NAD(+) + H2O = hexanoate + NADH + 2 H(+)</text>
        <dbReference type="Rhea" id="RHEA:67276"/>
        <dbReference type="ChEBI" id="CHEBI:15377"/>
        <dbReference type="ChEBI" id="CHEBI:15378"/>
        <dbReference type="ChEBI" id="CHEBI:17120"/>
        <dbReference type="ChEBI" id="CHEBI:57540"/>
        <dbReference type="ChEBI" id="CHEBI:57945"/>
        <dbReference type="ChEBI" id="CHEBI:88528"/>
    </reaction>
    <physiologicalReaction direction="left-to-right" evidence="23">
        <dbReference type="Rhea" id="RHEA:67277"/>
    </physiologicalReaction>
</comment>
<comment type="catalytic activity">
    <reaction evidence="9 12">
        <text>propanal + NAD(+) + H2O = propanoate + NADH + 2 H(+)</text>
        <dbReference type="Rhea" id="RHEA:67256"/>
        <dbReference type="ChEBI" id="CHEBI:15377"/>
        <dbReference type="ChEBI" id="CHEBI:15378"/>
        <dbReference type="ChEBI" id="CHEBI:17153"/>
        <dbReference type="ChEBI" id="CHEBI:17272"/>
        <dbReference type="ChEBI" id="CHEBI:57540"/>
        <dbReference type="ChEBI" id="CHEBI:57945"/>
    </reaction>
    <physiologicalReaction direction="left-to-right" evidence="25">
        <dbReference type="Rhea" id="RHEA:67257"/>
    </physiologicalReaction>
</comment>
<comment type="catalytic activity">
    <reaction evidence="12">
        <text>acetaldehyde + NAD(+) + H2O = acetate + NADH + 2 H(+)</text>
        <dbReference type="Rhea" id="RHEA:25294"/>
        <dbReference type="ChEBI" id="CHEBI:15343"/>
        <dbReference type="ChEBI" id="CHEBI:15377"/>
        <dbReference type="ChEBI" id="CHEBI:15378"/>
        <dbReference type="ChEBI" id="CHEBI:30089"/>
        <dbReference type="ChEBI" id="CHEBI:57540"/>
        <dbReference type="ChEBI" id="CHEBI:57945"/>
        <dbReference type="EC" id="1.2.1.3"/>
    </reaction>
    <physiologicalReaction direction="left-to-right" evidence="25">
        <dbReference type="Rhea" id="RHEA:25295"/>
    </physiologicalReaction>
</comment>
<comment type="catalytic activity">
    <reaction evidence="11 12">
        <text>benzaldehyde + NAD(+) + H2O = benzoate + NADH + 2 H(+)</text>
        <dbReference type="Rhea" id="RHEA:11840"/>
        <dbReference type="ChEBI" id="CHEBI:15377"/>
        <dbReference type="ChEBI" id="CHEBI:15378"/>
        <dbReference type="ChEBI" id="CHEBI:16150"/>
        <dbReference type="ChEBI" id="CHEBI:17169"/>
        <dbReference type="ChEBI" id="CHEBI:57540"/>
        <dbReference type="ChEBI" id="CHEBI:57945"/>
        <dbReference type="EC" id="1.2.1.28"/>
    </reaction>
    <physiologicalReaction direction="left-to-right" evidence="25">
        <dbReference type="Rhea" id="RHEA:11841"/>
    </physiologicalReaction>
</comment>
<comment type="catalytic activity">
    <reaction evidence="3">
        <text>4-aminobutanal + NAD(+) + H2O = 4-aminobutanoate + NADH + 2 H(+)</text>
        <dbReference type="Rhea" id="RHEA:19105"/>
        <dbReference type="ChEBI" id="CHEBI:15377"/>
        <dbReference type="ChEBI" id="CHEBI:15378"/>
        <dbReference type="ChEBI" id="CHEBI:57540"/>
        <dbReference type="ChEBI" id="CHEBI:57945"/>
        <dbReference type="ChEBI" id="CHEBI:58264"/>
        <dbReference type="ChEBI" id="CHEBI:59888"/>
        <dbReference type="EC" id="1.2.1.19"/>
    </reaction>
    <physiologicalReaction direction="left-to-right" evidence="3">
        <dbReference type="Rhea" id="RHEA:19106"/>
    </physiologicalReaction>
</comment>
<comment type="activity regulation">
    <text evidence="12 15">Inhibited by citral, disulfiram, and cyanamide. Activated by diethylstilbestrol (PubMed:19296407). Inhibited by duocarmycin analogs (PubMed:26373694).</text>
</comment>
<comment type="biophysicochemical properties">
    <kinetics>
        <KM evidence="12">59.4 uM for NAD (at pH 8.0)</KM>
        <KM evidence="11">85 uM for NAD (at pH 7.1 and 30 degrees Celsius)</KM>
        <KM evidence="11">2 uM for benzaldehyde (at pH 7.1 and 30 degrees Celsius)</KM>
        <KM evidence="12">4.8 uM for (E)-4-hydroxynon-2-enal (at pH 8.0)</KM>
        <KM evidence="9">17.9 uM for (E)-4-hydroxynon-2-enal (at pH 8.0 and 25 degrees Celsius)</KM>
        <KM evidence="9">114.4 uM for malonaldehyde (at pH 8.0 and 25 degrees Celsius)</KM>
        <KM evidence="12">3.5 uM for malonaldehyde (at pH 8.0)</KM>
        <KM evidence="11">95 uM for 3-deoxyglucosone (at pH 7.1 and 30 degrees Celsius)</KM>
        <KM evidence="12">238.2 uM for acetaldehyde (at pH 8.0)</KM>
        <KM evidence="12">121.4 uM for propanal (at pH 8.0)</KM>
        <KM evidence="9">137.2 uM for propanal (at pH 8.0 and 25 degrees Celsius)</KM>
        <KM evidence="13">15 uM for propanal (at pH 7.5)</KM>
        <KM evidence="9">13.4 uM for hexanal (at pH 8.0 and 25 degrees Celsius)</KM>
        <KM evidence="12">142.2 uM for benzaldehyde (at pH 8.0)</KM>
        <KM evidence="12">177.1 uM for trans-2-heptenal (at pH 8.0)</KM>
        <Vmax evidence="9">254.6 nmol/min/mg enzyme with (E)-4-hydroxynon-2-enal (at pH 8.0 and 25 degrees Celsius)</Vmax>
        <Vmax evidence="12">135.0 nmol/min/mg enzyme with (E)-4-hydroxynon-2-enal (at pH 8.0)</Vmax>
        <Vmax evidence="9">564.9 nmol/min/mg enzyme with malonaldehyde (at pH 8.0 and 25 degrees Celsius)</Vmax>
        <Vmax evidence="12">381.6 nmol/min/mg enzyme with malonaldehyde (at pH 8.0)</Vmax>
        <Vmax evidence="11">45.0 nmol/min/mg enzyme with 3-deoxyglucosone (at pH 7.1 and 30 degrees Celsius)</Vmax>
        <Vmax evidence="12">631.4 nmol/min/mg enzyme with acetaldehyde (at pH 8.0)</Vmax>
        <Vmax evidence="9">747.3 nmol/min/mg enzyme with propanal (at pH 8.0 and 25 degrees Celsius)</Vmax>
        <Vmax evidence="12">445.3 nmol/min/mg enzyme with propanal (at pH 8.0)</Vmax>
        <Vmax evidence="9">707.1 nmol/min/mg enzyme with hexanal (at pH 8.0 and 25 degrees Celsius)</Vmax>
        <Vmax evidence="12">750.3 nmol/min/mg enzyme with benzaldehyde (at pH 8.0)</Vmax>
        <Vmax evidence="11">72.0 nmol/min/mg enzyme with benzaldehyde (at pH 7.1 and 30 degrees Celsius)</Vmax>
        <Vmax evidence="12">155.8 nmol/min/mg enzyme with trans-2-heptenal (at pH 8.0)</Vmax>
    </kinetics>
    <phDependence>
        <text evidence="11">Optimum pH is 7.1-9 for the 3-deoxyglucosone dehydrogenase activity.</text>
    </phDependence>
</comment>
<comment type="pathway">
    <text evidence="4">Cofactor metabolism; retinol metabolism.</text>
</comment>
<comment type="subunit">
    <text evidence="5 16">Homotetramer (By similarity). Interacts with PRMT3; the interaction is direct, inhibits ALDH1A1 aldehyde dehydrogenase activity and is independent of the methyltransferase activity of PRMT3 (PubMed:33495566).</text>
</comment>
<comment type="interaction">
    <interactant intactId="EBI-752170">
        <id>P00352</id>
    </interactant>
    <interactant intactId="EBI-8589586">
        <id>P09172</id>
        <label>DBH</label>
    </interactant>
    <organismsDiffer>false</organismsDiffer>
    <experiments>3</experiments>
</comment>
<comment type="interaction">
    <interactant intactId="EBI-752170">
        <id>P00352</id>
    </interactant>
    <interactant intactId="EBI-744302">
        <id>P14136</id>
        <label>GFAP</label>
    </interactant>
    <organismsDiffer>false</organismsDiffer>
    <experiments>3</experiments>
</comment>
<comment type="interaction">
    <interactant intactId="EBI-752170">
        <id>P00352</id>
    </interactant>
    <interactant intactId="EBI-1055254">
        <id>Q8WXH2</id>
        <label>JPH3</label>
    </interactant>
    <organismsDiffer>false</organismsDiffer>
    <experiments>3</experiments>
</comment>
<comment type="subcellular location">
    <subcellularLocation>
        <location evidence="9">Cytoplasm</location>
        <location evidence="9">Cytosol</location>
    </subcellularLocation>
    <subcellularLocation>
        <location evidence="3">Cell projection</location>
        <location evidence="3">Axon</location>
    </subcellularLocation>
</comment>
<comment type="tissue specificity">
    <text evidence="11">Expressed by erythrocytes (at protein level).</text>
</comment>
<comment type="PTM">
    <text evidence="1">The N-terminus is blocked most probably by acetylation.</text>
</comment>
<comment type="similarity">
    <text evidence="22">Belongs to the aldehyde dehydrogenase family.</text>
</comment>
<reference key="1">
    <citation type="journal article" date="1989" name="Genomics">
        <title>Genomic structure of the human cytosolic aldehyde dehydrogenase gene.</title>
        <authorList>
            <person name="Hsu L.C."/>
            <person name="Chang W.-C."/>
            <person name="Yoshida A."/>
        </authorList>
    </citation>
    <scope>NUCLEOTIDE SEQUENCE [GENOMIC DNA]</scope>
</reference>
<reference key="2">
    <citation type="journal article" date="1993" name="Alcohol. Clin. Exp. Res.">
        <title>Cloning and expression of the full-length cDNAs encoding human liver class 1 and class 2 aldehyde dehydrogenase.</title>
        <authorList>
            <person name="Zheng C.F."/>
            <person name="Wang T.T."/>
            <person name="Weiner H."/>
        </authorList>
    </citation>
    <scope>NUCLEOTIDE SEQUENCE [MRNA]</scope>
    <scope>VARIANT SER-121</scope>
    <source>
        <tissue>Liver</tissue>
    </source>
</reference>
<reference key="3">
    <citation type="journal article" date="2009" name="J. Toxicol. Environ. Health Part A">
        <title>Molecular cloning and oxidative modification of human lens ALDH1A1: implication in impaired detoxification of lipid aldehydes.</title>
        <authorList>
            <person name="Xiao T."/>
            <person name="Shoeb M."/>
            <person name="Siddiqui M.S."/>
            <person name="Zhang M."/>
            <person name="Ramana K.V."/>
            <person name="Srivastava S.K."/>
            <person name="Vasiliou V."/>
            <person name="Ansari N.H."/>
        </authorList>
    </citation>
    <scope>NUCLEOTIDE SEQUENCE [MRNA]</scope>
    <scope>FUNCTION</scope>
    <scope>CATALYTIC ACTIVITY</scope>
    <scope>BIOPHYSICOCHEMICAL PROPERTIES</scope>
    <scope>ACTIVITY REGULATION</scope>
    <source>
        <tissue>Lens</tissue>
    </source>
</reference>
<reference key="4">
    <citation type="submission" date="2003-05" db="EMBL/GenBank/DDBJ databases">
        <title>Cloning of human full-length CDSs in BD Creator(TM) system donor vector.</title>
        <authorList>
            <person name="Kalnine N."/>
            <person name="Chen X."/>
            <person name="Rolfs A."/>
            <person name="Halleck A."/>
            <person name="Hines L."/>
            <person name="Eisenstein S."/>
            <person name="Koundinya M."/>
            <person name="Raphael J."/>
            <person name="Moreira D."/>
            <person name="Kelley T."/>
            <person name="LaBaer J."/>
            <person name="Lin Y."/>
            <person name="Phelan M."/>
            <person name="Farmer A."/>
        </authorList>
    </citation>
    <scope>NUCLEOTIDE SEQUENCE [LARGE SCALE MRNA]</scope>
</reference>
<reference key="5">
    <citation type="submission" date="2003-07" db="EMBL/GenBank/DDBJ databases">
        <authorList>
            <consortium name="NIEHS SNPs program"/>
        </authorList>
    </citation>
    <scope>NUCLEOTIDE SEQUENCE [GENOMIC DNA]</scope>
    <scope>VARIANT PHE-177</scope>
</reference>
<reference key="6">
    <citation type="journal article" date="2004" name="Nature">
        <title>DNA sequence and analysis of human chromosome 9.</title>
        <authorList>
            <person name="Humphray S.J."/>
            <person name="Oliver K."/>
            <person name="Hunt A.R."/>
            <person name="Plumb R.W."/>
            <person name="Loveland J.E."/>
            <person name="Howe K.L."/>
            <person name="Andrews T.D."/>
            <person name="Searle S."/>
            <person name="Hunt S.E."/>
            <person name="Scott C.E."/>
            <person name="Jones M.C."/>
            <person name="Ainscough R."/>
            <person name="Almeida J.P."/>
            <person name="Ambrose K.D."/>
            <person name="Ashwell R.I.S."/>
            <person name="Babbage A.K."/>
            <person name="Babbage S."/>
            <person name="Bagguley C.L."/>
            <person name="Bailey J."/>
            <person name="Banerjee R."/>
            <person name="Barker D.J."/>
            <person name="Barlow K.F."/>
            <person name="Bates K."/>
            <person name="Beasley H."/>
            <person name="Beasley O."/>
            <person name="Bird C.P."/>
            <person name="Bray-Allen S."/>
            <person name="Brown A.J."/>
            <person name="Brown J.Y."/>
            <person name="Burford D."/>
            <person name="Burrill W."/>
            <person name="Burton J."/>
            <person name="Carder C."/>
            <person name="Carter N.P."/>
            <person name="Chapman J.C."/>
            <person name="Chen Y."/>
            <person name="Clarke G."/>
            <person name="Clark S.Y."/>
            <person name="Clee C.M."/>
            <person name="Clegg S."/>
            <person name="Collier R.E."/>
            <person name="Corby N."/>
            <person name="Crosier M."/>
            <person name="Cummings A.T."/>
            <person name="Davies J."/>
            <person name="Dhami P."/>
            <person name="Dunn M."/>
            <person name="Dutta I."/>
            <person name="Dyer L.W."/>
            <person name="Earthrowl M.E."/>
            <person name="Faulkner L."/>
            <person name="Fleming C.J."/>
            <person name="Frankish A."/>
            <person name="Frankland J.A."/>
            <person name="French L."/>
            <person name="Fricker D.G."/>
            <person name="Garner P."/>
            <person name="Garnett J."/>
            <person name="Ghori J."/>
            <person name="Gilbert J.G.R."/>
            <person name="Glison C."/>
            <person name="Grafham D.V."/>
            <person name="Gribble S."/>
            <person name="Griffiths C."/>
            <person name="Griffiths-Jones S."/>
            <person name="Grocock R."/>
            <person name="Guy J."/>
            <person name="Hall R.E."/>
            <person name="Hammond S."/>
            <person name="Harley J.L."/>
            <person name="Harrison E.S.I."/>
            <person name="Hart E.A."/>
            <person name="Heath P.D."/>
            <person name="Henderson C.D."/>
            <person name="Hopkins B.L."/>
            <person name="Howard P.J."/>
            <person name="Howden P.J."/>
            <person name="Huckle E."/>
            <person name="Johnson C."/>
            <person name="Johnson D."/>
            <person name="Joy A.A."/>
            <person name="Kay M."/>
            <person name="Keenan S."/>
            <person name="Kershaw J.K."/>
            <person name="Kimberley A.M."/>
            <person name="King A."/>
            <person name="Knights A."/>
            <person name="Laird G.K."/>
            <person name="Langford C."/>
            <person name="Lawlor S."/>
            <person name="Leongamornlert D.A."/>
            <person name="Leversha M."/>
            <person name="Lloyd C."/>
            <person name="Lloyd D.M."/>
            <person name="Lovell J."/>
            <person name="Martin S."/>
            <person name="Mashreghi-Mohammadi M."/>
            <person name="Matthews L."/>
            <person name="McLaren S."/>
            <person name="McLay K.E."/>
            <person name="McMurray A."/>
            <person name="Milne S."/>
            <person name="Nickerson T."/>
            <person name="Nisbett J."/>
            <person name="Nordsiek G."/>
            <person name="Pearce A.V."/>
            <person name="Peck A.I."/>
            <person name="Porter K.M."/>
            <person name="Pandian R."/>
            <person name="Pelan S."/>
            <person name="Phillimore B."/>
            <person name="Povey S."/>
            <person name="Ramsey Y."/>
            <person name="Rand V."/>
            <person name="Scharfe M."/>
            <person name="Sehra H.K."/>
            <person name="Shownkeen R."/>
            <person name="Sims S.K."/>
            <person name="Skuce C.D."/>
            <person name="Smith M."/>
            <person name="Steward C.A."/>
            <person name="Swarbreck D."/>
            <person name="Sycamore N."/>
            <person name="Tester J."/>
            <person name="Thorpe A."/>
            <person name="Tracey A."/>
            <person name="Tromans A."/>
            <person name="Thomas D.W."/>
            <person name="Wall M."/>
            <person name="Wallis J.M."/>
            <person name="West A.P."/>
            <person name="Whitehead S.L."/>
            <person name="Willey D.L."/>
            <person name="Williams S.A."/>
            <person name="Wilming L."/>
            <person name="Wray P.W."/>
            <person name="Young L."/>
            <person name="Ashurst J.L."/>
            <person name="Coulson A."/>
            <person name="Blocker H."/>
            <person name="Durbin R.M."/>
            <person name="Sulston J.E."/>
            <person name="Hubbard T."/>
            <person name="Jackson M.J."/>
            <person name="Bentley D.R."/>
            <person name="Beck S."/>
            <person name="Rogers J."/>
            <person name="Dunham I."/>
        </authorList>
    </citation>
    <scope>NUCLEOTIDE SEQUENCE [LARGE SCALE GENOMIC DNA]</scope>
</reference>
<reference key="7">
    <citation type="submission" date="2005-07" db="EMBL/GenBank/DDBJ databases">
        <authorList>
            <person name="Mural R.J."/>
            <person name="Istrail S."/>
            <person name="Sutton G.G."/>
            <person name="Florea L."/>
            <person name="Halpern A.L."/>
            <person name="Mobarry C.M."/>
            <person name="Lippert R."/>
            <person name="Walenz B."/>
            <person name="Shatkay H."/>
            <person name="Dew I."/>
            <person name="Miller J.R."/>
            <person name="Flanigan M.J."/>
            <person name="Edwards N.J."/>
            <person name="Bolanos R."/>
            <person name="Fasulo D."/>
            <person name="Halldorsson B.V."/>
            <person name="Hannenhalli S."/>
            <person name="Turner R."/>
            <person name="Yooseph S."/>
            <person name="Lu F."/>
            <person name="Nusskern D.R."/>
            <person name="Shue B.C."/>
            <person name="Zheng X.H."/>
            <person name="Zhong F."/>
            <person name="Delcher A.L."/>
            <person name="Huson D.H."/>
            <person name="Kravitz S.A."/>
            <person name="Mouchard L."/>
            <person name="Reinert K."/>
            <person name="Remington K.A."/>
            <person name="Clark A.G."/>
            <person name="Waterman M.S."/>
            <person name="Eichler E.E."/>
            <person name="Adams M.D."/>
            <person name="Hunkapiller M.W."/>
            <person name="Myers E.W."/>
            <person name="Venter J.C."/>
        </authorList>
    </citation>
    <scope>NUCLEOTIDE SEQUENCE [LARGE SCALE GENOMIC DNA]</scope>
</reference>
<reference key="8">
    <citation type="journal article" date="2004" name="Genome Res.">
        <title>The status, quality, and expansion of the NIH full-length cDNA project: the Mammalian Gene Collection (MGC).</title>
        <authorList>
            <consortium name="The MGC Project Team"/>
        </authorList>
    </citation>
    <scope>NUCLEOTIDE SEQUENCE [LARGE SCALE MRNA]</scope>
    <source>
        <tissue>Colon</tissue>
    </source>
</reference>
<reference key="9">
    <citation type="journal article" date="1993" name="Adv. Exp. Med. Biol.">
        <title>Biological role of human cytosolic aldehyde dehydrogenase 1: hormonal response, retinal oxidation and implication in testicular feminization.</title>
        <authorList>
            <person name="Yoshida A."/>
            <person name="Hsu L.C."/>
            <person name="Yanagawa Y."/>
        </authorList>
    </citation>
    <scope>NUCLEOTIDE SEQUENCE [GENOMIC DNA] OF 1-6</scope>
</reference>
<reference key="10">
    <citation type="journal article" date="1984" name="Eur. J. Biochem.">
        <title>Aldehyde dehydrogenase from human liver. Primary structure of the cytoplasmic isoenzyme.</title>
        <authorList>
            <person name="Hempel J."/>
            <person name="von Bahr-Lindstroem H."/>
            <person name="Joernvall H."/>
        </authorList>
    </citation>
    <scope>PROTEIN SEQUENCE OF 2-501</scope>
    <scope>ACETYLATION AT SER-2</scope>
    <source>
        <tissue>Liver</tissue>
    </source>
</reference>
<reference key="11">
    <citation type="journal article" date="1985" name="Alcohol">
        <title>Molecular abnormality and cDNA cloning of human aldehyde dehydrogenases.</title>
        <authorList>
            <person name="Yoshida A."/>
            <person name="Ikawa M."/>
            <person name="Hsu L.C."/>
            <person name="Tani K."/>
        </authorList>
    </citation>
    <scope>NUCLEOTIDE SEQUENCE [MRNA] OF 162-501</scope>
</reference>
<reference key="12">
    <citation type="journal article" date="1985" name="Proc. Natl. Acad. Sci. U.S.A.">
        <title>Cloning of cDNAs for human aldehyde dehydrogenases 1 and 2.</title>
        <authorList>
            <person name="Hsu L.C."/>
            <person name="Tani K."/>
            <person name="Fujiyoshi T."/>
            <person name="Kurachi K."/>
            <person name="Yoshida A."/>
        </authorList>
    </citation>
    <scope>NUCLEOTIDE SEQUENCE [MRNA] OF 162-501</scope>
    <source>
        <tissue>Liver</tissue>
    </source>
</reference>
<reference key="13">
    <citation type="journal article" date="1987" name="Biochemistry">
        <title>Active site of human liver aldehyde dehydrogenase.</title>
        <authorList>
            <person name="Abriola D.P."/>
            <person name="Fields R."/>
            <person name="Stein S."/>
            <person name="Mackerell A.D. Jr."/>
            <person name="Pietruszko R."/>
        </authorList>
    </citation>
    <scope>PROTEIN SEQUENCE OF 266-273</scope>
    <scope>ACTIVE SITE</scope>
    <scope>NAD-BINDING</scope>
</reference>
<reference key="14">
    <citation type="journal article" date="1989" name="Enzyme">
        <title>Aldehyde dehydrogenase from human erythrocytes: structural relationship to the liver cytosolic isozyme.</title>
        <authorList>
            <person name="Agarwal D.P."/>
            <person name="Cohn P."/>
            <person name="Goedde H.W."/>
            <person name="Hempel J."/>
        </authorList>
    </citation>
    <scope>PARTIAL PROTEIN SEQUENCE</scope>
    <source>
        <tissue>Erythrocyte</tissue>
    </source>
</reference>
<reference key="15">
    <citation type="journal article" date="2003" name="DNA Cell Biol.">
        <title>Molecular cloning and baculovirus expression of the rabbit corneal aldehyde dehydrogenase (ALDH1A1) cDNA.</title>
        <authorList>
            <person name="Manzer R."/>
            <person name="Qamar L."/>
            <person name="Estey T."/>
            <person name="Pappa A."/>
            <person name="Petersen D.R."/>
            <person name="Vasiliou V."/>
        </authorList>
    </citation>
    <scope>FUNCTION</scope>
    <scope>CATALYTIC ACTIVITY</scope>
    <scope>BIOPHYSICOCHEMICAL PROPERTIES</scope>
    <scope>SUBCELLULAR LOCATION</scope>
</reference>
<reference key="16">
    <citation type="journal article" date="2005" name="Invest. Ophthalmol. Vis. Sci.">
        <title>Role of aldehyde dehydrogenase isozymes in the defense of rat lens and human lens epithelial cells against oxidative stress.</title>
        <authorList>
            <person name="Choudhary S."/>
            <person name="Xiao T."/>
            <person name="Vergara L.A."/>
            <person name="Srivastava S."/>
            <person name="Nees D."/>
            <person name="Piatigorsky J."/>
            <person name="Ansari N.H."/>
        </authorList>
    </citation>
    <scope>FUNCTION</scope>
    <scope>CATALYTIC ACTIVITY</scope>
</reference>
<reference key="17">
    <citation type="journal article" date="2007" name="Biochimie">
        <title>Identification of 3-deoxyglucosone dehydrogenase as aldehyde dehydrogenase 1A1 (retinaldehyde dehydrogenase 1).</title>
        <authorList>
            <person name="Collard F."/>
            <person name="Vertommen D."/>
            <person name="Fortpied J."/>
            <person name="Duester G."/>
            <person name="Van Schaftingen E."/>
        </authorList>
    </citation>
    <scope>FUNCTION</scope>
    <scope>CATALYTIC ACTIVITY</scope>
    <scope>BIOPHYSICOCHEMICAL PROPERTIES</scope>
    <scope>TISSUE SPECIFICITY</scope>
</reference>
<reference key="18">
    <citation type="journal article" date="2009" name="Science">
        <title>Lysine acetylation targets protein complexes and co-regulates major cellular functions.</title>
        <authorList>
            <person name="Choudhary C."/>
            <person name="Kumar C."/>
            <person name="Gnad F."/>
            <person name="Nielsen M.L."/>
            <person name="Rehman M."/>
            <person name="Walther T.C."/>
            <person name="Olsen J.V."/>
            <person name="Mann M."/>
        </authorList>
    </citation>
    <scope>ACETYLATION [LARGE SCALE ANALYSIS] AT LYS-91; LYS-128; LYS-252; LYS-353; LYS-367; LYS-410; LYS-419; LYS-435 AND LYS-495</scope>
    <scope>IDENTIFICATION BY MASS SPECTROMETRY [LARGE SCALE ANALYSIS]</scope>
</reference>
<reference key="19">
    <citation type="journal article" date="2011" name="BMC Syst. Biol.">
        <title>Initial characterization of the human central proteome.</title>
        <authorList>
            <person name="Burkard T.R."/>
            <person name="Planyavsky M."/>
            <person name="Kaupe I."/>
            <person name="Breitwieser F.P."/>
            <person name="Buerckstuemmer T."/>
            <person name="Bennett K.L."/>
            <person name="Superti-Furga G."/>
            <person name="Colinge J."/>
        </authorList>
    </citation>
    <scope>IDENTIFICATION BY MASS SPECTROMETRY [LARGE SCALE ANALYSIS]</scope>
</reference>
<reference key="20">
    <citation type="journal article" date="2012" name="Mol. Cell. Proteomics">
        <title>Comparative large-scale characterisation of plant vs. mammal proteins reveals similar and idiosyncratic N-alpha acetylation features.</title>
        <authorList>
            <person name="Bienvenut W.V."/>
            <person name="Sumpton D."/>
            <person name="Martinez A."/>
            <person name="Lilla S."/>
            <person name="Espagne C."/>
            <person name="Meinnel T."/>
            <person name="Giglione C."/>
        </authorList>
    </citation>
    <scope>ACETYLATION [LARGE SCALE ANALYSIS] AT SER-2</scope>
    <scope>CLEAVAGE OF INITIATOR METHIONINE [LARGE SCALE ANALYSIS]</scope>
    <scope>IDENTIFICATION BY MASS SPECTROMETRY [LARGE SCALE ANALYSIS]</scope>
</reference>
<reference key="21">
    <citation type="journal article" date="2014" name="J. Proteomics">
        <title>An enzyme assisted RP-RPLC approach for in-depth analysis of human liver phosphoproteome.</title>
        <authorList>
            <person name="Bian Y."/>
            <person name="Song C."/>
            <person name="Cheng K."/>
            <person name="Dong M."/>
            <person name="Wang F."/>
            <person name="Huang J."/>
            <person name="Sun D."/>
            <person name="Wang L."/>
            <person name="Ye M."/>
            <person name="Zou H."/>
        </authorList>
    </citation>
    <scope>PHOSPHORYLATION [LARGE SCALE ANALYSIS] AT THR-337 AND SER-413</scope>
    <scope>IDENTIFICATION BY MASS SPECTROMETRY [LARGE SCALE ANALYSIS]</scope>
    <source>
        <tissue>Liver</tissue>
    </source>
</reference>
<reference key="22">
    <citation type="journal article" date="2021" name="Commun. Biol.">
        <title>PRMT3 interacts with ALDH1A1 and regulates gene-expression by inhibiting retinoic acid signaling.</title>
        <authorList>
            <person name="Verma M."/>
            <person name="Khan M.I.K."/>
            <person name="Kadumuri R.V."/>
            <person name="Chakrapani B."/>
            <person name="Awasthi S."/>
            <person name="Mahesh A."/>
            <person name="Govindaraju G."/>
            <person name="Chavali P.L."/>
            <person name="Rajavelu A."/>
            <person name="Chavali S."/>
            <person name="Dhayalan A."/>
        </authorList>
    </citation>
    <scope>INTERACTION WITH PRMT3</scope>
    <scope>REGION</scope>
</reference>
<reference evidence="32" key="23">
    <citation type="journal article" date="2015" name="Angew. Chem. Int. Ed. Engl.">
        <title>Structural, biochemical, and computational studies reveal the mechanism of selective aldehyde dehydrogenase 1A1 inhibition by cytotoxic duocarmycin analogues.</title>
        <authorList>
            <person name="Koch M.F."/>
            <person name="Harteis S."/>
            <person name="Blank I.D."/>
            <person name="Pestel G."/>
            <person name="Tietze L.F."/>
            <person name="Ochsenfeld C."/>
            <person name="Schneider S."/>
            <person name="Sieber S.A."/>
        </authorList>
    </citation>
    <scope>X-RAY CRYSTALLOGRAPHY (1.85 ANGSTROMS) IN COMPLEX WITH DUOCARMYCIN ANALOG</scope>
    <scope>FUNCTION</scope>
    <scope>ACTIVITY REGULATION</scope>
    <scope>MUTAGENESIS OF CYS-302</scope>
</reference>
<reference evidence="27 28" key="24">
    <citation type="journal article" date="2015" name="Chem. Biol. Interact.">
        <title>Development of a high-throughput in vitro assay to identify selective inhibitors for human ALDH1A1.</title>
        <authorList>
            <person name="Morgan C.A."/>
            <person name="Hurley T.D."/>
        </authorList>
    </citation>
    <scope>X-RAY CRYSTALLOGRAPHY (1.74 ANGSTROMS) OF VARIANT SER-121 ALONE AND IN COMPLEX WITH NADH</scope>
    <scope>FUNCTION</scope>
    <scope>CATALYTIC ACTIVITY</scope>
    <scope>BIOPHYSICOCHEMICAL PROPERTIES</scope>
</reference>
<reference evidence="29 30 31" key="25">
    <citation type="journal article" date="2015" name="J. Med. Chem.">
        <title>Characterization of two distinct structural classes of selective aldehyde dehydrogenase 1A1 inhibitors.</title>
        <authorList>
            <person name="Morgan C.A."/>
            <person name="Hurley T.D."/>
        </authorList>
    </citation>
    <scope>X-RAY CRYSTALLOGRAPHY (1.80 ANGSTROMS) IN COMPLEX WITH NAD AND INHIBITORS</scope>
    <scope>MUTAGENESIS OF GLY-458</scope>
</reference>
<dbReference type="EC" id="1.2.1.19" evidence="3"/>
<dbReference type="EC" id="1.2.1.28" evidence="11 12"/>
<dbReference type="EC" id="1.2.1.3" evidence="9 10 11 12"/>
<dbReference type="EC" id="1.2.1.36" evidence="4"/>
<dbReference type="EMBL" id="M31994">
    <property type="protein sequence ID" value="AAA51692.1"/>
    <property type="molecule type" value="Genomic_DNA"/>
</dbReference>
<dbReference type="EMBL" id="M31982">
    <property type="protein sequence ID" value="AAA51692.1"/>
    <property type="status" value="JOINED"/>
    <property type="molecule type" value="Genomic_DNA"/>
</dbReference>
<dbReference type="EMBL" id="M31983">
    <property type="protein sequence ID" value="AAA51692.1"/>
    <property type="status" value="JOINED"/>
    <property type="molecule type" value="Genomic_DNA"/>
</dbReference>
<dbReference type="EMBL" id="M31984">
    <property type="protein sequence ID" value="AAA51692.1"/>
    <property type="status" value="JOINED"/>
    <property type="molecule type" value="Genomic_DNA"/>
</dbReference>
<dbReference type="EMBL" id="M31985">
    <property type="protein sequence ID" value="AAA51692.1"/>
    <property type="status" value="JOINED"/>
    <property type="molecule type" value="Genomic_DNA"/>
</dbReference>
<dbReference type="EMBL" id="M31986">
    <property type="protein sequence ID" value="AAA51692.1"/>
    <property type="status" value="JOINED"/>
    <property type="molecule type" value="Genomic_DNA"/>
</dbReference>
<dbReference type="EMBL" id="M31987">
    <property type="protein sequence ID" value="AAA51692.1"/>
    <property type="status" value="JOINED"/>
    <property type="molecule type" value="Genomic_DNA"/>
</dbReference>
<dbReference type="EMBL" id="M31988">
    <property type="protein sequence ID" value="AAA51692.1"/>
    <property type="status" value="JOINED"/>
    <property type="molecule type" value="Genomic_DNA"/>
</dbReference>
<dbReference type="EMBL" id="M31989">
    <property type="protein sequence ID" value="AAA51692.1"/>
    <property type="status" value="JOINED"/>
    <property type="molecule type" value="Genomic_DNA"/>
</dbReference>
<dbReference type="EMBL" id="M31990">
    <property type="protein sequence ID" value="AAA51692.1"/>
    <property type="status" value="JOINED"/>
    <property type="molecule type" value="Genomic_DNA"/>
</dbReference>
<dbReference type="EMBL" id="M31991">
    <property type="protein sequence ID" value="AAA51692.1"/>
    <property type="status" value="JOINED"/>
    <property type="molecule type" value="Genomic_DNA"/>
</dbReference>
<dbReference type="EMBL" id="M31992">
    <property type="protein sequence ID" value="AAA51692.1"/>
    <property type="status" value="JOINED"/>
    <property type="molecule type" value="Genomic_DNA"/>
</dbReference>
<dbReference type="EMBL" id="AF003341">
    <property type="protein sequence ID" value="AAC51652.1"/>
    <property type="molecule type" value="mRNA"/>
</dbReference>
<dbReference type="EMBL" id="AY390731">
    <property type="protein sequence ID" value="AAR92229.1"/>
    <property type="molecule type" value="mRNA"/>
</dbReference>
<dbReference type="EMBL" id="BT006921">
    <property type="protein sequence ID" value="AAP35567.1"/>
    <property type="molecule type" value="mRNA"/>
</dbReference>
<dbReference type="EMBL" id="AY338497">
    <property type="protein sequence ID" value="AAP88039.1"/>
    <property type="molecule type" value="Genomic_DNA"/>
</dbReference>
<dbReference type="EMBL" id="AL591031">
    <property type="status" value="NOT_ANNOTATED_CDS"/>
    <property type="molecule type" value="Genomic_DNA"/>
</dbReference>
<dbReference type="EMBL" id="CH471089">
    <property type="protein sequence ID" value="EAW62543.1"/>
    <property type="molecule type" value="Genomic_DNA"/>
</dbReference>
<dbReference type="EMBL" id="BC001505">
    <property type="protein sequence ID" value="AAH01505.1"/>
    <property type="molecule type" value="mRNA"/>
</dbReference>
<dbReference type="EMBL" id="S61235">
    <property type="protein sequence ID" value="AAD13925.1"/>
    <property type="molecule type" value="Genomic_DNA"/>
</dbReference>
<dbReference type="EMBL" id="M26761">
    <property type="protein sequence ID" value="AAA35518.1"/>
    <property type="molecule type" value="mRNA"/>
</dbReference>
<dbReference type="EMBL" id="K03000">
    <property type="protein sequence ID" value="AAA51695.1"/>
    <property type="molecule type" value="mRNA"/>
</dbReference>
<dbReference type="CCDS" id="CCDS6644.1"/>
<dbReference type="PIR" id="A33371">
    <property type="entry name" value="DEHUE1"/>
</dbReference>
<dbReference type="RefSeq" id="NP_000680.2">
    <property type="nucleotide sequence ID" value="NM_000689.4"/>
</dbReference>
<dbReference type="PDB" id="4WB9">
    <property type="method" value="X-ray"/>
    <property type="resolution" value="2.07 A"/>
    <property type="chains" value="A=1-501"/>
</dbReference>
<dbReference type="PDB" id="4WJ9">
    <property type="method" value="X-ray"/>
    <property type="resolution" value="1.74 A"/>
    <property type="chains" value="A=1-501"/>
</dbReference>
<dbReference type="PDB" id="4WP7">
    <property type="method" value="X-ray"/>
    <property type="resolution" value="1.80 A"/>
    <property type="chains" value="A=1-501"/>
</dbReference>
<dbReference type="PDB" id="4WPN">
    <property type="method" value="X-ray"/>
    <property type="resolution" value="1.95 A"/>
    <property type="chains" value="A=1-501"/>
</dbReference>
<dbReference type="PDB" id="4X4L">
    <property type="method" value="X-ray"/>
    <property type="resolution" value="1.85 A"/>
    <property type="chains" value="A=1-501"/>
</dbReference>
<dbReference type="PDB" id="5AC2">
    <property type="method" value="X-ray"/>
    <property type="resolution" value="1.85 A"/>
    <property type="chains" value="A=1-501"/>
</dbReference>
<dbReference type="PDB" id="5L2M">
    <property type="method" value="X-ray"/>
    <property type="resolution" value="1.70 A"/>
    <property type="chains" value="A=1-501"/>
</dbReference>
<dbReference type="PDB" id="5L2N">
    <property type="method" value="X-ray"/>
    <property type="resolution" value="1.70 A"/>
    <property type="chains" value="A=1-501"/>
</dbReference>
<dbReference type="PDB" id="5L2O">
    <property type="method" value="X-ray"/>
    <property type="resolution" value="2.05 A"/>
    <property type="chains" value="A/B/C/D/E/F/G/H=1-501"/>
</dbReference>
<dbReference type="PDB" id="5TEI">
    <property type="method" value="X-ray"/>
    <property type="resolution" value="2.10 A"/>
    <property type="chains" value="A=1-501"/>
</dbReference>
<dbReference type="PDB" id="6DUM">
    <property type="method" value="X-ray"/>
    <property type="resolution" value="2.00 A"/>
    <property type="chains" value="A=1-501"/>
</dbReference>
<dbReference type="PDB" id="7JWS">
    <property type="method" value="X-ray"/>
    <property type="resolution" value="1.60 A"/>
    <property type="chains" value="A=1-501"/>
</dbReference>
<dbReference type="PDB" id="7JWT">
    <property type="method" value="X-ray"/>
    <property type="resolution" value="1.80 A"/>
    <property type="chains" value="A=1-501"/>
</dbReference>
<dbReference type="PDB" id="7JWU">
    <property type="method" value="X-ray"/>
    <property type="resolution" value="1.90 A"/>
    <property type="chains" value="A=1-501"/>
</dbReference>
<dbReference type="PDB" id="7JWV">
    <property type="method" value="X-ray"/>
    <property type="resolution" value="1.60 A"/>
    <property type="chains" value="A=1-501"/>
</dbReference>
<dbReference type="PDB" id="7JWW">
    <property type="method" value="X-ray"/>
    <property type="resolution" value="1.60 A"/>
    <property type="chains" value="A=1-501"/>
</dbReference>
<dbReference type="PDB" id="7UM9">
    <property type="method" value="X-ray"/>
    <property type="resolution" value="1.80 A"/>
    <property type="chains" value="A=1-501"/>
</dbReference>
<dbReference type="PDB" id="8D46">
    <property type="method" value="EM"/>
    <property type="resolution" value="2.84 A"/>
    <property type="chains" value="A/B/C/D=1-501"/>
</dbReference>
<dbReference type="PDB" id="8DNO">
    <property type="method" value="EM"/>
    <property type="resolution" value="3.40 A"/>
    <property type="chains" value="A/B/C/D=1-501"/>
</dbReference>
<dbReference type="PDB" id="8ENE">
    <property type="method" value="EM"/>
    <property type="resolution" value="2.64 A"/>
    <property type="chains" value="A/B/C/D=1-501"/>
</dbReference>
<dbReference type="PDB" id="8PVH">
    <property type="method" value="EM"/>
    <property type="resolution" value="2.90 A"/>
    <property type="chains" value="A=2-501"/>
</dbReference>
<dbReference type="PDB" id="8T0N">
    <property type="method" value="X-ray"/>
    <property type="resolution" value="1.86 A"/>
    <property type="chains" value="A=1-501"/>
</dbReference>
<dbReference type="PDB" id="8T0T">
    <property type="method" value="X-ray"/>
    <property type="resolution" value="1.75 A"/>
    <property type="chains" value="A=1-501"/>
</dbReference>
<dbReference type="PDB" id="8WFQ">
    <property type="method" value="X-ray"/>
    <property type="resolution" value="3.50 A"/>
    <property type="chains" value="A/B/C/D/E/F/G/H=1-501"/>
</dbReference>
<dbReference type="PDBsum" id="4WB9"/>
<dbReference type="PDBsum" id="4WJ9"/>
<dbReference type="PDBsum" id="4WP7"/>
<dbReference type="PDBsum" id="4WPN"/>
<dbReference type="PDBsum" id="4X4L"/>
<dbReference type="PDBsum" id="5AC2"/>
<dbReference type="PDBsum" id="5L2M"/>
<dbReference type="PDBsum" id="5L2N"/>
<dbReference type="PDBsum" id="5L2O"/>
<dbReference type="PDBsum" id="5TEI"/>
<dbReference type="PDBsum" id="6DUM"/>
<dbReference type="PDBsum" id="7JWS"/>
<dbReference type="PDBsum" id="7JWT"/>
<dbReference type="PDBsum" id="7JWU"/>
<dbReference type="PDBsum" id="7JWV"/>
<dbReference type="PDBsum" id="7JWW"/>
<dbReference type="PDBsum" id="7UM9"/>
<dbReference type="PDBsum" id="8D46"/>
<dbReference type="PDBsum" id="8DNO"/>
<dbReference type="PDBsum" id="8ENE"/>
<dbReference type="PDBsum" id="8PVH"/>
<dbReference type="PDBsum" id="8T0N"/>
<dbReference type="PDBsum" id="8T0T"/>
<dbReference type="PDBsum" id="8WFQ"/>
<dbReference type="EMDB" id="EMD-17966"/>
<dbReference type="EMDB" id="EMD-27176"/>
<dbReference type="EMDB" id="EMD-28271"/>
<dbReference type="SMR" id="P00352"/>
<dbReference type="BioGRID" id="106718">
    <property type="interactions" value="75"/>
</dbReference>
<dbReference type="FunCoup" id="P00352">
    <property type="interactions" value="255"/>
</dbReference>
<dbReference type="IntAct" id="P00352">
    <property type="interactions" value="40"/>
</dbReference>
<dbReference type="STRING" id="9606.ENSP00000297785"/>
<dbReference type="BindingDB" id="P00352"/>
<dbReference type="ChEMBL" id="CHEMBL3577"/>
<dbReference type="DrugBank" id="DB04447">
    <property type="generic name" value="1,4-Dithiothreitol"/>
</dbReference>
<dbReference type="DrugBank" id="DB09116">
    <property type="generic name" value="Calcium carbimide"/>
</dbReference>
<dbReference type="DrugBank" id="DB09462">
    <property type="generic name" value="Glycerin"/>
</dbReference>
<dbReference type="DrugBank" id="DB00157">
    <property type="generic name" value="NADH"/>
</dbReference>
<dbReference type="DrugBank" id="DB00755">
    <property type="generic name" value="Tretinoin"/>
</dbReference>
<dbReference type="DrugBank" id="DB00162">
    <property type="generic name" value="Vitamin A"/>
</dbReference>
<dbReference type="DrugCentral" id="P00352"/>
<dbReference type="GlyGen" id="P00352">
    <property type="glycosylation" value="2 sites, 1 O-linked glycan (1 site)"/>
</dbReference>
<dbReference type="iPTMnet" id="P00352"/>
<dbReference type="MetOSite" id="P00352"/>
<dbReference type="PhosphoSitePlus" id="P00352"/>
<dbReference type="SwissPalm" id="P00352"/>
<dbReference type="BioMuta" id="ALDH1A1"/>
<dbReference type="DMDM" id="118495"/>
<dbReference type="REPRODUCTION-2DPAGE" id="IPI00218914"/>
<dbReference type="REPRODUCTION-2DPAGE" id="P00352"/>
<dbReference type="jPOST" id="P00352"/>
<dbReference type="MassIVE" id="P00352"/>
<dbReference type="PaxDb" id="9606-ENSP00000297785"/>
<dbReference type="PeptideAtlas" id="P00352"/>
<dbReference type="ProteomicsDB" id="51235"/>
<dbReference type="Pumba" id="P00352"/>
<dbReference type="Antibodypedia" id="1064">
    <property type="antibodies" value="1055 antibodies from 47 providers"/>
</dbReference>
<dbReference type="DNASU" id="216"/>
<dbReference type="Ensembl" id="ENST00000297785.8">
    <property type="protein sequence ID" value="ENSP00000297785.3"/>
    <property type="gene ID" value="ENSG00000165092.13"/>
</dbReference>
<dbReference type="GeneID" id="216"/>
<dbReference type="KEGG" id="hsa:216"/>
<dbReference type="MANE-Select" id="ENST00000297785.8">
    <property type="protein sequence ID" value="ENSP00000297785.3"/>
    <property type="RefSeq nucleotide sequence ID" value="NM_000689.5"/>
    <property type="RefSeq protein sequence ID" value="NP_000680.2"/>
</dbReference>
<dbReference type="AGR" id="HGNC:402"/>
<dbReference type="CTD" id="216"/>
<dbReference type="DisGeNET" id="216"/>
<dbReference type="GeneCards" id="ALDH1A1"/>
<dbReference type="HGNC" id="HGNC:402">
    <property type="gene designation" value="ALDH1A1"/>
</dbReference>
<dbReference type="HPA" id="ENSG00000165092">
    <property type="expression patterns" value="Tissue enhanced (liver)"/>
</dbReference>
<dbReference type="MIM" id="100640">
    <property type="type" value="gene"/>
</dbReference>
<dbReference type="neXtProt" id="NX_P00352"/>
<dbReference type="OpenTargets" id="ENSG00000165092"/>
<dbReference type="PharmGKB" id="PA24692"/>
<dbReference type="VEuPathDB" id="HostDB:ENSG00000165092"/>
<dbReference type="eggNOG" id="KOG2450">
    <property type="taxonomic scope" value="Eukaryota"/>
</dbReference>
<dbReference type="GeneTree" id="ENSGT00940000154609"/>
<dbReference type="HOGENOM" id="CLU_005391_0_2_1"/>
<dbReference type="InParanoid" id="P00352"/>
<dbReference type="OMA" id="VRHVMIK"/>
<dbReference type="OrthoDB" id="310895at2759"/>
<dbReference type="PAN-GO" id="P00352">
    <property type="GO annotations" value="1 GO annotation based on evolutionary models"/>
</dbReference>
<dbReference type="PhylomeDB" id="P00352"/>
<dbReference type="TreeFam" id="TF300455"/>
<dbReference type="BioCyc" id="MetaCyc:HS09183-MONOMER"/>
<dbReference type="BRENDA" id="1.2.1.36">
    <property type="organism ID" value="2681"/>
</dbReference>
<dbReference type="PathwayCommons" id="P00352"/>
<dbReference type="Reactome" id="R-HSA-5365859">
    <property type="pathway name" value="RA biosynthesis pathway"/>
</dbReference>
<dbReference type="Reactome" id="R-HSA-70350">
    <property type="pathway name" value="Fructose catabolism"/>
</dbReference>
<dbReference type="Reactome" id="R-HSA-71384">
    <property type="pathway name" value="Ethanol oxidation"/>
</dbReference>
<dbReference type="SABIO-RK" id="P00352"/>
<dbReference type="SignaLink" id="P00352"/>
<dbReference type="SIGNOR" id="P00352"/>
<dbReference type="UniPathway" id="UPA00912"/>
<dbReference type="BioGRID-ORCS" id="216">
    <property type="hits" value="10 hits in 1159 CRISPR screens"/>
</dbReference>
<dbReference type="CD-CODE" id="91857CE7">
    <property type="entry name" value="Nucleolus"/>
</dbReference>
<dbReference type="ChiTaRS" id="ALDH1A1">
    <property type="organism name" value="human"/>
</dbReference>
<dbReference type="EvolutionaryTrace" id="P00352"/>
<dbReference type="GeneWiki" id="ALDH1A1"/>
<dbReference type="GenomeRNAi" id="216"/>
<dbReference type="Pharos" id="P00352">
    <property type="development level" value="Tchem"/>
</dbReference>
<dbReference type="PRO" id="PR:P00352"/>
<dbReference type="Proteomes" id="UP000005640">
    <property type="component" value="Chromosome 9"/>
</dbReference>
<dbReference type="RNAct" id="P00352">
    <property type="molecule type" value="protein"/>
</dbReference>
<dbReference type="Bgee" id="ENSG00000165092">
    <property type="expression patterns" value="Expressed in bronchial epithelial cell and 201 other cell types or tissues"/>
</dbReference>
<dbReference type="ExpressionAtlas" id="P00352">
    <property type="expression patterns" value="baseline and differential"/>
</dbReference>
<dbReference type="GO" id="GO:0030424">
    <property type="term" value="C:axon"/>
    <property type="evidence" value="ECO:0000250"/>
    <property type="project" value="UniProtKB"/>
</dbReference>
<dbReference type="GO" id="GO:0005737">
    <property type="term" value="C:cytoplasm"/>
    <property type="evidence" value="ECO:0000304"/>
    <property type="project" value="ProtInc"/>
</dbReference>
<dbReference type="GO" id="GO:0005829">
    <property type="term" value="C:cytosol"/>
    <property type="evidence" value="ECO:0000314"/>
    <property type="project" value="UniProtKB"/>
</dbReference>
<dbReference type="GO" id="GO:0070062">
    <property type="term" value="C:extracellular exosome"/>
    <property type="evidence" value="ECO:0007005"/>
    <property type="project" value="UniProtKB"/>
</dbReference>
<dbReference type="GO" id="GO:0045202">
    <property type="term" value="C:synapse"/>
    <property type="evidence" value="ECO:0000250"/>
    <property type="project" value="UniProtKB"/>
</dbReference>
<dbReference type="GO" id="GO:0106373">
    <property type="term" value="F:3-deoxyglucosone dehydrogenase activity"/>
    <property type="evidence" value="ECO:0000314"/>
    <property type="project" value="UniProtKB"/>
</dbReference>
<dbReference type="GO" id="GO:0140087">
    <property type="term" value="F:acetaldehyde dehydrogenase (NAD+) activity"/>
    <property type="evidence" value="ECO:0007669"/>
    <property type="project" value="RHEA"/>
</dbReference>
<dbReference type="GO" id="GO:0004029">
    <property type="term" value="F:aldehyde dehydrogenase (NAD+) activity"/>
    <property type="evidence" value="ECO:0000314"/>
    <property type="project" value="UniProtKB"/>
</dbReference>
<dbReference type="GO" id="GO:0019145">
    <property type="term" value="F:aminobutyraldehyde dehydrogenase (NAD+) activity"/>
    <property type="evidence" value="ECO:0000250"/>
    <property type="project" value="UniProtKB"/>
</dbReference>
<dbReference type="GO" id="GO:0005497">
    <property type="term" value="F:androgen binding"/>
    <property type="evidence" value="ECO:0000304"/>
    <property type="project" value="ProtInc"/>
</dbReference>
<dbReference type="GO" id="GO:0018479">
    <property type="term" value="F:benzaldehyde dehydrogenase (NAD+) activity"/>
    <property type="evidence" value="ECO:0000318"/>
    <property type="project" value="GO_Central"/>
</dbReference>
<dbReference type="GO" id="GO:0005096">
    <property type="term" value="F:GTPase activator activity"/>
    <property type="evidence" value="ECO:0000304"/>
    <property type="project" value="UniProtKB"/>
</dbReference>
<dbReference type="GO" id="GO:0051287">
    <property type="term" value="F:NAD binding"/>
    <property type="evidence" value="ECO:0000250"/>
    <property type="project" value="CAFA"/>
</dbReference>
<dbReference type="GO" id="GO:0001758">
    <property type="term" value="F:retinal dehydrogenase activity"/>
    <property type="evidence" value="ECO:0000250"/>
    <property type="project" value="UniProtKB"/>
</dbReference>
<dbReference type="GO" id="GO:0006081">
    <property type="term" value="P:aldehyde metabolic process"/>
    <property type="evidence" value="ECO:0000304"/>
    <property type="project" value="ProtInc"/>
</dbReference>
<dbReference type="GO" id="GO:0110095">
    <property type="term" value="P:cellular detoxification of aldehyde"/>
    <property type="evidence" value="ECO:0000315"/>
    <property type="project" value="UniProtKB"/>
</dbReference>
<dbReference type="GO" id="GO:0030392">
    <property type="term" value="P:fructosamine catabolic process"/>
    <property type="evidence" value="ECO:0000314"/>
    <property type="project" value="UniProtKB"/>
</dbReference>
<dbReference type="GO" id="GO:0009449">
    <property type="term" value="P:gamma-aminobutyric acid biosynthetic process"/>
    <property type="evidence" value="ECO:0000250"/>
    <property type="project" value="UniProtKB"/>
</dbReference>
<dbReference type="GO" id="GO:0036438">
    <property type="term" value="P:maintenance of lens transparency"/>
    <property type="evidence" value="ECO:0000250"/>
    <property type="project" value="UniProtKB"/>
</dbReference>
<dbReference type="GO" id="GO:0120163">
    <property type="term" value="P:negative regulation of cold-induced thermogenesis"/>
    <property type="evidence" value="ECO:0000250"/>
    <property type="project" value="YuBioLab"/>
</dbReference>
<dbReference type="GO" id="GO:0001523">
    <property type="term" value="P:retinoid metabolic process"/>
    <property type="evidence" value="ECO:0000250"/>
    <property type="project" value="UniProtKB"/>
</dbReference>
<dbReference type="GO" id="GO:0042572">
    <property type="term" value="P:retinol metabolic process"/>
    <property type="evidence" value="ECO:0007669"/>
    <property type="project" value="UniProtKB-UniPathway"/>
</dbReference>
<dbReference type="CDD" id="cd07141">
    <property type="entry name" value="ALDH_F1AB_F2_RALDH1"/>
    <property type="match status" value="1"/>
</dbReference>
<dbReference type="FunFam" id="3.40.605.10:FF:000029">
    <property type="entry name" value="Aldehyde dehydrogenase, mitochondrial"/>
    <property type="match status" value="1"/>
</dbReference>
<dbReference type="FunFam" id="3.40.605.10:FF:000026">
    <property type="entry name" value="Aldehyde dehydrogenase, putative"/>
    <property type="match status" value="1"/>
</dbReference>
<dbReference type="FunFam" id="3.40.309.10:FF:000001">
    <property type="entry name" value="Mitochondrial aldehyde dehydrogenase 2"/>
    <property type="match status" value="1"/>
</dbReference>
<dbReference type="Gene3D" id="3.40.605.10">
    <property type="entry name" value="Aldehyde Dehydrogenase, Chain A, domain 1"/>
    <property type="match status" value="1"/>
</dbReference>
<dbReference type="Gene3D" id="3.40.309.10">
    <property type="entry name" value="Aldehyde Dehydrogenase, Chain A, domain 2"/>
    <property type="match status" value="1"/>
</dbReference>
<dbReference type="InterPro" id="IPR016161">
    <property type="entry name" value="Ald_DH/histidinol_DH"/>
</dbReference>
<dbReference type="InterPro" id="IPR016163">
    <property type="entry name" value="Ald_DH_C"/>
</dbReference>
<dbReference type="InterPro" id="IPR016160">
    <property type="entry name" value="Ald_DH_CS_CYS"/>
</dbReference>
<dbReference type="InterPro" id="IPR029510">
    <property type="entry name" value="Ald_DH_CS_GLU"/>
</dbReference>
<dbReference type="InterPro" id="IPR016162">
    <property type="entry name" value="Ald_DH_N"/>
</dbReference>
<dbReference type="InterPro" id="IPR015590">
    <property type="entry name" value="Aldehyde_DH_dom"/>
</dbReference>
<dbReference type="PANTHER" id="PTHR11699">
    <property type="entry name" value="ALDEHYDE DEHYDROGENASE-RELATED"/>
    <property type="match status" value="1"/>
</dbReference>
<dbReference type="Pfam" id="PF00171">
    <property type="entry name" value="Aldedh"/>
    <property type="match status" value="1"/>
</dbReference>
<dbReference type="SUPFAM" id="SSF53720">
    <property type="entry name" value="ALDH-like"/>
    <property type="match status" value="1"/>
</dbReference>
<dbReference type="PROSITE" id="PS00070">
    <property type="entry name" value="ALDEHYDE_DEHYDR_CYS"/>
    <property type="match status" value="1"/>
</dbReference>
<dbReference type="PROSITE" id="PS00687">
    <property type="entry name" value="ALDEHYDE_DEHYDR_GLU"/>
    <property type="match status" value="1"/>
</dbReference>
<name>AL1A1_HUMAN</name>
<accession>P00352</accession>
<accession>O00768</accession>
<accession>Q5SYR1</accession>
<organism>
    <name type="scientific">Homo sapiens</name>
    <name type="common">Human</name>
    <dbReference type="NCBI Taxonomy" id="9606"/>
    <lineage>
        <taxon>Eukaryota</taxon>
        <taxon>Metazoa</taxon>
        <taxon>Chordata</taxon>
        <taxon>Craniata</taxon>
        <taxon>Vertebrata</taxon>
        <taxon>Euteleostomi</taxon>
        <taxon>Mammalia</taxon>
        <taxon>Eutheria</taxon>
        <taxon>Euarchontoglires</taxon>
        <taxon>Primates</taxon>
        <taxon>Haplorrhini</taxon>
        <taxon>Catarrhini</taxon>
        <taxon>Hominidae</taxon>
        <taxon>Homo</taxon>
    </lineage>
</organism>
<sequence>MSSSGTPDLPVLLTDLKIQYTKIFINNEWHDSVSGKKFPVFNPATEEELCQVEEGDKEDVDKAVKAARQAFQIGSPWRTMDASERGRLLYKLADLIERDRLLLATMESMNGGKLYSNAYLNDLAGCIKTLRYCAGWADKIQGRTIPIDGNFFTYTRHEPIGVCGQIIPWNFPLVMLIWKIGPALSCGNTVVVKPAEQTPLTALHVASLIKEAGFPPGVVNIVPGYGPTAGAAISSHMDIDKVAFTGSTEVGKLIKEAAGKSNLKRVTLELGGKSPCIVLADADLDNAVEFAHHGVFYHQGQCCIAASRIFVEESIYDEFVRRSVERAKKYILGNPLTPGVTQGPQIDKEQYDKILDLIESGKKEGAKLECGGGPWGNKGYFVQPTVFSNVTDEMRIAKEEIFGPVQQIMKFKSLDDVIKRANNTFYGLSAGVFTKDIDKAITISSALQAGTVWVNCYGVVSAQCPFGGFKMSGNGRELGEYGFHEYTEVKTVTVKISQKNS</sequence>
<gene>
    <name evidence="26" type="primary">ALDH1A1</name>
    <name type="synonym">ALDC</name>
    <name evidence="26" type="synonym">ALDH1</name>
    <name evidence="26" type="synonym">PUMB1</name>
</gene>
<protein>
    <recommendedName>
        <fullName evidence="25">Aldehyde dehydrogenase 1A1</fullName>
        <ecNumber evidence="3">1.2.1.19</ecNumber>
        <ecNumber evidence="11 12">1.2.1.28</ecNumber>
        <ecNumber evidence="9 10 11 12">1.2.1.3</ecNumber>
        <ecNumber evidence="4">1.2.1.36</ecNumber>
    </recommendedName>
    <alternativeName>
        <fullName evidence="24">3-deoxyglucosone dehydrogenase</fullName>
    </alternativeName>
    <alternativeName>
        <fullName>ALDH-E1</fullName>
    </alternativeName>
    <alternativeName>
        <fullName>ALHDII</fullName>
    </alternativeName>
    <alternativeName>
        <fullName evidence="26">Aldehyde dehydrogenase family 1 member A1</fullName>
    </alternativeName>
    <alternativeName>
        <fullName evidence="21">Aldehyde dehydrogenase, cytosolic</fullName>
    </alternativeName>
    <alternativeName>
        <fullName evidence="4">Retinal dehydrogenase 1</fullName>
        <shortName evidence="4">RALDH 1</shortName>
        <shortName evidence="4">RalDH1</shortName>
    </alternativeName>
</protein>
<proteinExistence type="evidence at protein level"/>
<evidence type="ECO:0000250" key="1">
    <source>
        <dbReference type="UniProtKB" id="P15437"/>
    </source>
</evidence>
<evidence type="ECO:0000250" key="2">
    <source>
        <dbReference type="UniProtKB" id="P20000"/>
    </source>
</evidence>
<evidence type="ECO:0000250" key="3">
    <source>
        <dbReference type="UniProtKB" id="P24549"/>
    </source>
</evidence>
<evidence type="ECO:0000250" key="4">
    <source>
        <dbReference type="UniProtKB" id="P51647"/>
    </source>
</evidence>
<evidence type="ECO:0000250" key="5">
    <source>
        <dbReference type="UniProtKB" id="P51977"/>
    </source>
</evidence>
<evidence type="ECO:0000250" key="6">
    <source>
        <dbReference type="UniProtKB" id="Q8HYE4"/>
    </source>
</evidence>
<evidence type="ECO:0000255" key="7">
    <source>
        <dbReference type="PROSITE-ProRule" id="PRU10007"/>
    </source>
</evidence>
<evidence type="ECO:0000255" key="8">
    <source>
        <dbReference type="PROSITE-ProRule" id="PRU10008"/>
    </source>
</evidence>
<evidence type="ECO:0000269" key="9">
    <source>
    </source>
</evidence>
<evidence type="ECO:0000269" key="10">
    <source>
    </source>
</evidence>
<evidence type="ECO:0000269" key="11">
    <source>
    </source>
</evidence>
<evidence type="ECO:0000269" key="12">
    <source>
    </source>
</evidence>
<evidence type="ECO:0000269" key="13">
    <source>
    </source>
</evidence>
<evidence type="ECO:0000269" key="14">
    <source>
    </source>
</evidence>
<evidence type="ECO:0000269" key="15">
    <source>
    </source>
</evidence>
<evidence type="ECO:0000269" key="16">
    <source>
    </source>
</evidence>
<evidence type="ECO:0000269" key="17">
    <source>
    </source>
</evidence>
<evidence type="ECO:0000269" key="18">
    <source>
    </source>
</evidence>
<evidence type="ECO:0000269" key="19">
    <source>
    </source>
</evidence>
<evidence type="ECO:0000269" key="20">
    <source ref="5"/>
</evidence>
<evidence type="ECO:0000303" key="21">
    <source>
    </source>
</evidence>
<evidence type="ECO:0000305" key="22"/>
<evidence type="ECO:0000305" key="23">
    <source>
    </source>
</evidence>
<evidence type="ECO:0000305" key="24">
    <source>
    </source>
</evidence>
<evidence type="ECO:0000305" key="25">
    <source>
    </source>
</evidence>
<evidence type="ECO:0000312" key="26">
    <source>
        <dbReference type="HGNC" id="HGNC:402"/>
    </source>
</evidence>
<evidence type="ECO:0007744" key="27">
    <source>
        <dbReference type="PDB" id="4WB9"/>
    </source>
</evidence>
<evidence type="ECO:0007744" key="28">
    <source>
        <dbReference type="PDB" id="4WJ9"/>
    </source>
</evidence>
<evidence type="ECO:0007744" key="29">
    <source>
        <dbReference type="PDB" id="4WP7"/>
    </source>
</evidence>
<evidence type="ECO:0007744" key="30">
    <source>
        <dbReference type="PDB" id="4WPN"/>
    </source>
</evidence>
<evidence type="ECO:0007744" key="31">
    <source>
        <dbReference type="PDB" id="4X4L"/>
    </source>
</evidence>
<evidence type="ECO:0007744" key="32">
    <source>
        <dbReference type="PDB" id="5AC2"/>
    </source>
</evidence>
<evidence type="ECO:0007744" key="33">
    <source>
    </source>
</evidence>
<evidence type="ECO:0007744" key="34">
    <source>
    </source>
</evidence>
<evidence type="ECO:0007744" key="35">
    <source>
    </source>
</evidence>
<evidence type="ECO:0007829" key="36">
    <source>
        <dbReference type="PDB" id="5L2O"/>
    </source>
</evidence>
<evidence type="ECO:0007829" key="37">
    <source>
        <dbReference type="PDB" id="7JWS"/>
    </source>
</evidence>
<evidence type="ECO:0007829" key="38">
    <source>
        <dbReference type="PDB" id="8D46"/>
    </source>
</evidence>
<evidence type="ECO:0007829" key="39">
    <source>
        <dbReference type="PDB" id="8ENE"/>
    </source>
</evidence>
<evidence type="ECO:0007829" key="40">
    <source>
        <dbReference type="PDB" id="8WFQ"/>
    </source>
</evidence>